<sequence length="311" mass="35305">MFQHKTVLLRETVDGLNIKPDGTYVDCTLGGAGHSTYLLQQLSEKGRLIAFDQDDTALQHAKEVLSDYKGQLILIKSNFRYLKEYLNEQGVTEVDGILFDLGVSSPQLDTPERGFSYHHDAPLDMRMDQSATLSAKEVVNEWRYEDLVRIFFKYGEEKFSKQIARKIEEARMKSPIQTTGQLVDLIKDAIPAPARRSGGHPAKRVFQAIRIAVNDELRVFEEALEQAIEVLKPGGRVSVITFHSLEDRICKTTFKEKSSLPELPPGLPVIPEEFEPELKLITRKPITASQEELEENNRARSAKLRIAEKRK</sequence>
<accession>Q07876</accession>
<gene>
    <name evidence="1" type="primary">rsmH</name>
    <name type="synonym">mraW</name>
    <name evidence="4" type="synonym">yllC</name>
    <name type="synonym">ylxA</name>
    <name type="ordered locus">BSU15140</name>
</gene>
<comment type="function">
    <text evidence="1">Specifically methylates the N4 position of cytidine in position 1402 (C1402) of 16S rRNA.</text>
</comment>
<comment type="catalytic activity">
    <reaction evidence="1">
        <text>cytidine(1402) in 16S rRNA + S-adenosyl-L-methionine = N(4)-methylcytidine(1402) in 16S rRNA + S-adenosyl-L-homocysteine + H(+)</text>
        <dbReference type="Rhea" id="RHEA:42928"/>
        <dbReference type="Rhea" id="RHEA-COMP:10286"/>
        <dbReference type="Rhea" id="RHEA-COMP:10287"/>
        <dbReference type="ChEBI" id="CHEBI:15378"/>
        <dbReference type="ChEBI" id="CHEBI:57856"/>
        <dbReference type="ChEBI" id="CHEBI:59789"/>
        <dbReference type="ChEBI" id="CHEBI:74506"/>
        <dbReference type="ChEBI" id="CHEBI:82748"/>
        <dbReference type="EC" id="2.1.1.199"/>
    </reaction>
</comment>
<comment type="subcellular location">
    <subcellularLocation>
        <location evidence="1">Cytoplasm</location>
    </subcellularLocation>
</comment>
<comment type="induction">
    <text evidence="3">Transcribed at a low level in exponential phase, it may be further induced in stationary phase. Part of the mraZ-rsmH-ftsL-pbpB operon.</text>
</comment>
<comment type="disruption phenotype">
    <text evidence="3">No visible phenotype.</text>
</comment>
<comment type="similarity">
    <text evidence="1">Belongs to the methyltransferase superfamily. RsmH family.</text>
</comment>
<organism>
    <name type="scientific">Bacillus subtilis (strain 168)</name>
    <dbReference type="NCBI Taxonomy" id="224308"/>
    <lineage>
        <taxon>Bacteria</taxon>
        <taxon>Bacillati</taxon>
        <taxon>Bacillota</taxon>
        <taxon>Bacilli</taxon>
        <taxon>Bacillales</taxon>
        <taxon>Bacillaceae</taxon>
        <taxon>Bacillus</taxon>
    </lineage>
</organism>
<proteinExistence type="evidence at transcript level"/>
<protein>
    <recommendedName>
        <fullName evidence="1">Ribosomal RNA small subunit methyltransferase H</fullName>
        <ecNumber evidence="1">2.1.1.199</ecNumber>
    </recommendedName>
    <alternativeName>
        <fullName evidence="1">16S rRNA m(4)C1402 methyltransferase</fullName>
    </alternativeName>
    <alternativeName>
        <fullName evidence="1">rRNA (cytosine-N(4)-)-methyltransferase RsmH</fullName>
    </alternativeName>
</protein>
<name>RSMH_BACSU</name>
<dbReference type="EC" id="2.1.1.199" evidence="1"/>
<dbReference type="EMBL" id="Z68230">
    <property type="protein sequence ID" value="CAA92525.1"/>
    <property type="molecule type" value="Genomic_DNA"/>
</dbReference>
<dbReference type="EMBL" id="AL009126">
    <property type="protein sequence ID" value="CAB13387.1"/>
    <property type="molecule type" value="Genomic_DNA"/>
</dbReference>
<dbReference type="EMBL" id="L09703">
    <property type="protein sequence ID" value="AAC36835.1"/>
    <property type="molecule type" value="Unassigned_DNA"/>
</dbReference>
<dbReference type="PIR" id="D69881">
    <property type="entry name" value="D69881"/>
</dbReference>
<dbReference type="RefSeq" id="NP_389397.1">
    <property type="nucleotide sequence ID" value="NC_000964.3"/>
</dbReference>
<dbReference type="RefSeq" id="WP_003245724.1">
    <property type="nucleotide sequence ID" value="NZ_OZ025638.1"/>
</dbReference>
<dbReference type="SMR" id="Q07876"/>
<dbReference type="FunCoup" id="Q07876">
    <property type="interactions" value="548"/>
</dbReference>
<dbReference type="STRING" id="224308.BSU15140"/>
<dbReference type="jPOST" id="Q07876"/>
<dbReference type="PaxDb" id="224308-BSU15140"/>
<dbReference type="EnsemblBacteria" id="CAB13387">
    <property type="protein sequence ID" value="CAB13387"/>
    <property type="gene ID" value="BSU_15140"/>
</dbReference>
<dbReference type="GeneID" id="936555"/>
<dbReference type="KEGG" id="bsu:BSU15140"/>
<dbReference type="PATRIC" id="fig|224308.179.peg.1650"/>
<dbReference type="eggNOG" id="COG0275">
    <property type="taxonomic scope" value="Bacteria"/>
</dbReference>
<dbReference type="InParanoid" id="Q07876"/>
<dbReference type="OrthoDB" id="9806637at2"/>
<dbReference type="PhylomeDB" id="Q07876"/>
<dbReference type="BioCyc" id="BSUB:BSU15140-MONOMER"/>
<dbReference type="Proteomes" id="UP000001570">
    <property type="component" value="Chromosome"/>
</dbReference>
<dbReference type="GO" id="GO:0005737">
    <property type="term" value="C:cytoplasm"/>
    <property type="evidence" value="ECO:0000318"/>
    <property type="project" value="GO_Central"/>
</dbReference>
<dbReference type="GO" id="GO:0071424">
    <property type="term" value="F:rRNA (cytosine-N4-)-methyltransferase activity"/>
    <property type="evidence" value="ECO:0000318"/>
    <property type="project" value="GO_Central"/>
</dbReference>
<dbReference type="GO" id="GO:0070475">
    <property type="term" value="P:rRNA base methylation"/>
    <property type="evidence" value="ECO:0000318"/>
    <property type="project" value="GO_Central"/>
</dbReference>
<dbReference type="FunFam" id="1.10.150.170:FF:000001">
    <property type="entry name" value="Ribosomal RNA small subunit methyltransferase H"/>
    <property type="match status" value="1"/>
</dbReference>
<dbReference type="Gene3D" id="1.10.150.170">
    <property type="entry name" value="Putative methyltransferase TM0872, insert domain"/>
    <property type="match status" value="1"/>
</dbReference>
<dbReference type="Gene3D" id="3.40.50.150">
    <property type="entry name" value="Vaccinia Virus protein VP39"/>
    <property type="match status" value="1"/>
</dbReference>
<dbReference type="HAMAP" id="MF_01007">
    <property type="entry name" value="16SrRNA_methyltr_H"/>
    <property type="match status" value="1"/>
</dbReference>
<dbReference type="InterPro" id="IPR002903">
    <property type="entry name" value="RsmH"/>
</dbReference>
<dbReference type="InterPro" id="IPR023397">
    <property type="entry name" value="SAM-dep_MeTrfase_MraW_recog"/>
</dbReference>
<dbReference type="InterPro" id="IPR029063">
    <property type="entry name" value="SAM-dependent_MTases_sf"/>
</dbReference>
<dbReference type="NCBIfam" id="TIGR00006">
    <property type="entry name" value="16S rRNA (cytosine(1402)-N(4))-methyltransferase RsmH"/>
    <property type="match status" value="1"/>
</dbReference>
<dbReference type="PANTHER" id="PTHR11265:SF0">
    <property type="entry name" value="12S RRNA N4-METHYLCYTIDINE METHYLTRANSFERASE"/>
    <property type="match status" value="1"/>
</dbReference>
<dbReference type="PANTHER" id="PTHR11265">
    <property type="entry name" value="S-ADENOSYL-METHYLTRANSFERASE MRAW"/>
    <property type="match status" value="1"/>
</dbReference>
<dbReference type="Pfam" id="PF01795">
    <property type="entry name" value="Methyltransf_5"/>
    <property type="match status" value="1"/>
</dbReference>
<dbReference type="PIRSF" id="PIRSF004486">
    <property type="entry name" value="MraW"/>
    <property type="match status" value="1"/>
</dbReference>
<dbReference type="SUPFAM" id="SSF81799">
    <property type="entry name" value="Putative methyltransferase TM0872, insert domain"/>
    <property type="match status" value="1"/>
</dbReference>
<dbReference type="SUPFAM" id="SSF53335">
    <property type="entry name" value="S-adenosyl-L-methionine-dependent methyltransferases"/>
    <property type="match status" value="1"/>
</dbReference>
<keyword id="KW-0963">Cytoplasm</keyword>
<keyword id="KW-0489">Methyltransferase</keyword>
<keyword id="KW-1185">Reference proteome</keyword>
<keyword id="KW-0698">rRNA processing</keyword>
<keyword id="KW-0949">S-adenosyl-L-methionine</keyword>
<keyword id="KW-0808">Transferase</keyword>
<evidence type="ECO:0000255" key="1">
    <source>
        <dbReference type="HAMAP-Rule" id="MF_01007"/>
    </source>
</evidence>
<evidence type="ECO:0000256" key="2">
    <source>
        <dbReference type="SAM" id="MobiDB-lite"/>
    </source>
</evidence>
<evidence type="ECO:0000269" key="3">
    <source>
    </source>
</evidence>
<evidence type="ECO:0000303" key="4">
    <source>
    </source>
</evidence>
<reference key="1">
    <citation type="journal article" date="1996" name="J. Bacteriol.">
        <title>A complex four-gene operon containing essential cell division gene pbpB in Bacillus subtilis.</title>
        <authorList>
            <person name="Daniel R.A."/>
            <person name="Williams A.M."/>
            <person name="Errington J."/>
        </authorList>
    </citation>
    <scope>NUCLEOTIDE SEQUENCE [GENOMIC DNA]</scope>
    <scope>INDUCTION</scope>
    <scope>DISRUPTION PHENOTYPE</scope>
    <source>
        <strain>168</strain>
    </source>
</reference>
<reference key="2">
    <citation type="journal article" date="1997" name="Nature">
        <title>The complete genome sequence of the Gram-positive bacterium Bacillus subtilis.</title>
        <authorList>
            <person name="Kunst F."/>
            <person name="Ogasawara N."/>
            <person name="Moszer I."/>
            <person name="Albertini A.M."/>
            <person name="Alloni G."/>
            <person name="Azevedo V."/>
            <person name="Bertero M.G."/>
            <person name="Bessieres P."/>
            <person name="Bolotin A."/>
            <person name="Borchert S."/>
            <person name="Borriss R."/>
            <person name="Boursier L."/>
            <person name="Brans A."/>
            <person name="Braun M."/>
            <person name="Brignell S.C."/>
            <person name="Bron S."/>
            <person name="Brouillet S."/>
            <person name="Bruschi C.V."/>
            <person name="Caldwell B."/>
            <person name="Capuano V."/>
            <person name="Carter N.M."/>
            <person name="Choi S.-K."/>
            <person name="Codani J.-J."/>
            <person name="Connerton I.F."/>
            <person name="Cummings N.J."/>
            <person name="Daniel R.A."/>
            <person name="Denizot F."/>
            <person name="Devine K.M."/>
            <person name="Duesterhoeft A."/>
            <person name="Ehrlich S.D."/>
            <person name="Emmerson P.T."/>
            <person name="Entian K.-D."/>
            <person name="Errington J."/>
            <person name="Fabret C."/>
            <person name="Ferrari E."/>
            <person name="Foulger D."/>
            <person name="Fritz C."/>
            <person name="Fujita M."/>
            <person name="Fujita Y."/>
            <person name="Fuma S."/>
            <person name="Galizzi A."/>
            <person name="Galleron N."/>
            <person name="Ghim S.-Y."/>
            <person name="Glaser P."/>
            <person name="Goffeau A."/>
            <person name="Golightly E.J."/>
            <person name="Grandi G."/>
            <person name="Guiseppi G."/>
            <person name="Guy B.J."/>
            <person name="Haga K."/>
            <person name="Haiech J."/>
            <person name="Harwood C.R."/>
            <person name="Henaut A."/>
            <person name="Hilbert H."/>
            <person name="Holsappel S."/>
            <person name="Hosono S."/>
            <person name="Hullo M.-F."/>
            <person name="Itaya M."/>
            <person name="Jones L.-M."/>
            <person name="Joris B."/>
            <person name="Karamata D."/>
            <person name="Kasahara Y."/>
            <person name="Klaerr-Blanchard M."/>
            <person name="Klein C."/>
            <person name="Kobayashi Y."/>
            <person name="Koetter P."/>
            <person name="Koningstein G."/>
            <person name="Krogh S."/>
            <person name="Kumano M."/>
            <person name="Kurita K."/>
            <person name="Lapidus A."/>
            <person name="Lardinois S."/>
            <person name="Lauber J."/>
            <person name="Lazarevic V."/>
            <person name="Lee S.-M."/>
            <person name="Levine A."/>
            <person name="Liu H."/>
            <person name="Masuda S."/>
            <person name="Mauel C."/>
            <person name="Medigue C."/>
            <person name="Medina N."/>
            <person name="Mellado R.P."/>
            <person name="Mizuno M."/>
            <person name="Moestl D."/>
            <person name="Nakai S."/>
            <person name="Noback M."/>
            <person name="Noone D."/>
            <person name="O'Reilly M."/>
            <person name="Ogawa K."/>
            <person name="Ogiwara A."/>
            <person name="Oudega B."/>
            <person name="Park S.-H."/>
            <person name="Parro V."/>
            <person name="Pohl T.M."/>
            <person name="Portetelle D."/>
            <person name="Porwollik S."/>
            <person name="Prescott A.M."/>
            <person name="Presecan E."/>
            <person name="Pujic P."/>
            <person name="Purnelle B."/>
            <person name="Rapoport G."/>
            <person name="Rey M."/>
            <person name="Reynolds S."/>
            <person name="Rieger M."/>
            <person name="Rivolta C."/>
            <person name="Rocha E."/>
            <person name="Roche B."/>
            <person name="Rose M."/>
            <person name="Sadaie Y."/>
            <person name="Sato T."/>
            <person name="Scanlan E."/>
            <person name="Schleich S."/>
            <person name="Schroeter R."/>
            <person name="Scoffone F."/>
            <person name="Sekiguchi J."/>
            <person name="Sekowska A."/>
            <person name="Seror S.J."/>
            <person name="Serror P."/>
            <person name="Shin B.-S."/>
            <person name="Soldo B."/>
            <person name="Sorokin A."/>
            <person name="Tacconi E."/>
            <person name="Takagi T."/>
            <person name="Takahashi H."/>
            <person name="Takemaru K."/>
            <person name="Takeuchi M."/>
            <person name="Tamakoshi A."/>
            <person name="Tanaka T."/>
            <person name="Terpstra P."/>
            <person name="Tognoni A."/>
            <person name="Tosato V."/>
            <person name="Uchiyama S."/>
            <person name="Vandenbol M."/>
            <person name="Vannier F."/>
            <person name="Vassarotti A."/>
            <person name="Viari A."/>
            <person name="Wambutt R."/>
            <person name="Wedler E."/>
            <person name="Wedler H."/>
            <person name="Weitzenegger T."/>
            <person name="Winters P."/>
            <person name="Wipat A."/>
            <person name="Yamamoto H."/>
            <person name="Yamane K."/>
            <person name="Yasumoto K."/>
            <person name="Yata K."/>
            <person name="Yoshida K."/>
            <person name="Yoshikawa H.-F."/>
            <person name="Zumstein E."/>
            <person name="Yoshikawa H."/>
            <person name="Danchin A."/>
        </authorList>
    </citation>
    <scope>NUCLEOTIDE SEQUENCE [LARGE SCALE GENOMIC DNA]</scope>
    <source>
        <strain>168</strain>
    </source>
</reference>
<reference key="3">
    <citation type="journal article" date="1993" name="J. Bacteriol.">
        <title>Cloning and sequencing of the cell division gene pbpB, which encodes penicillin-binding protein 2B in Bacillus subtilis.</title>
        <authorList>
            <person name="Yanouri A."/>
            <person name="Daniel R.A."/>
            <person name="Errington J."/>
            <person name="Buchanan C.E."/>
        </authorList>
    </citation>
    <scope>NUCLEOTIDE SEQUENCE [GENOMIC DNA] OF 108-311</scope>
    <source>
        <strain>168</strain>
    </source>
</reference>
<feature type="chain" id="PRO_0000108578" description="Ribosomal RNA small subunit methyltransferase H">
    <location>
        <begin position="1"/>
        <end position="311"/>
    </location>
</feature>
<feature type="region of interest" description="Disordered" evidence="2">
    <location>
        <begin position="287"/>
        <end position="311"/>
    </location>
</feature>
<feature type="compositionally biased region" description="Basic residues" evidence="2">
    <location>
        <begin position="300"/>
        <end position="311"/>
    </location>
</feature>
<feature type="binding site" evidence="1">
    <location>
        <begin position="32"/>
        <end position="34"/>
    </location>
    <ligand>
        <name>S-adenosyl-L-methionine</name>
        <dbReference type="ChEBI" id="CHEBI:59789"/>
    </ligand>
</feature>
<feature type="binding site" evidence="1">
    <location>
        <position position="52"/>
    </location>
    <ligand>
        <name>S-adenosyl-L-methionine</name>
        <dbReference type="ChEBI" id="CHEBI:59789"/>
    </ligand>
</feature>
<feature type="binding site" evidence="1">
    <location>
        <position position="79"/>
    </location>
    <ligand>
        <name>S-adenosyl-L-methionine</name>
        <dbReference type="ChEBI" id="CHEBI:59789"/>
    </ligand>
</feature>
<feature type="binding site" evidence="1">
    <location>
        <position position="100"/>
    </location>
    <ligand>
        <name>S-adenosyl-L-methionine</name>
        <dbReference type="ChEBI" id="CHEBI:59789"/>
    </ligand>
</feature>
<feature type="binding site" evidence="1">
    <location>
        <position position="107"/>
    </location>
    <ligand>
        <name>S-adenosyl-L-methionine</name>
        <dbReference type="ChEBI" id="CHEBI:59789"/>
    </ligand>
</feature>